<gene>
    <name type="primary">DUT</name>
    <name type="ordered locus">Os03g0669100</name>
    <name type="ordered locus">LOC_Os03g46640</name>
    <name type="ORF">OSJNBa0039O18.10</name>
</gene>
<organism>
    <name type="scientific">Oryza sativa subsp. japonica</name>
    <name type="common">Rice</name>
    <dbReference type="NCBI Taxonomy" id="39947"/>
    <lineage>
        <taxon>Eukaryota</taxon>
        <taxon>Viridiplantae</taxon>
        <taxon>Streptophyta</taxon>
        <taxon>Embryophyta</taxon>
        <taxon>Tracheophyta</taxon>
        <taxon>Spermatophyta</taxon>
        <taxon>Magnoliopsida</taxon>
        <taxon>Liliopsida</taxon>
        <taxon>Poales</taxon>
        <taxon>Poaceae</taxon>
        <taxon>BOP clade</taxon>
        <taxon>Oryzoideae</taxon>
        <taxon>Oryzeae</taxon>
        <taxon>Oryzinae</taxon>
        <taxon>Oryza</taxon>
        <taxon>Oryza sativa</taxon>
    </lineage>
</organism>
<keyword id="KW-0378">Hydrolase</keyword>
<keyword id="KW-0460">Magnesium</keyword>
<keyword id="KW-0479">Metal-binding</keyword>
<keyword id="KW-0546">Nucleotide metabolism</keyword>
<keyword id="KW-1185">Reference proteome</keyword>
<proteinExistence type="inferred from homology"/>
<dbReference type="EC" id="3.6.1.23"/>
<dbReference type="EMBL" id="AC133930">
    <property type="protein sequence ID" value="AAP44642.1"/>
    <property type="status" value="ALT_SEQ"/>
    <property type="molecule type" value="Genomic_DNA"/>
</dbReference>
<dbReference type="EMBL" id="DP000009">
    <property type="protein sequence ID" value="ABF98100.1"/>
    <property type="status" value="ALT_SEQ"/>
    <property type="molecule type" value="Genomic_DNA"/>
</dbReference>
<dbReference type="EMBL" id="DP000009">
    <property type="protein sequence ID" value="ABF98101.1"/>
    <property type="molecule type" value="Genomic_DNA"/>
</dbReference>
<dbReference type="EMBL" id="AP008209">
    <property type="protein sequence ID" value="BAF12776.1"/>
    <property type="status" value="ALT_SEQ"/>
    <property type="molecule type" value="Genomic_DNA"/>
</dbReference>
<dbReference type="EMBL" id="AP014959">
    <property type="status" value="NOT_ANNOTATED_CDS"/>
    <property type="molecule type" value="Genomic_DNA"/>
</dbReference>
<dbReference type="RefSeq" id="XP_015628906.1">
    <property type="nucleotide sequence ID" value="XM_015773420.1"/>
</dbReference>
<dbReference type="SMR" id="Q10FF9"/>
<dbReference type="FunCoup" id="Q10FF9">
    <property type="interactions" value="2582"/>
</dbReference>
<dbReference type="STRING" id="39947.Q10FF9"/>
<dbReference type="PaxDb" id="39947-Q10FF9"/>
<dbReference type="KEGG" id="dosa:Os03g0669100"/>
<dbReference type="eggNOG" id="KOG3370">
    <property type="taxonomic scope" value="Eukaryota"/>
</dbReference>
<dbReference type="InParanoid" id="Q10FF9"/>
<dbReference type="OrthoDB" id="10261072at2759"/>
<dbReference type="UniPathway" id="UPA00610">
    <property type="reaction ID" value="UER00666"/>
</dbReference>
<dbReference type="Proteomes" id="UP000000763">
    <property type="component" value="Chromosome 3"/>
</dbReference>
<dbReference type="Proteomes" id="UP000059680">
    <property type="component" value="Chromosome 3"/>
</dbReference>
<dbReference type="GO" id="GO:0004170">
    <property type="term" value="F:dUTP diphosphatase activity"/>
    <property type="evidence" value="ECO:0000318"/>
    <property type="project" value="GO_Central"/>
</dbReference>
<dbReference type="GO" id="GO:0000287">
    <property type="term" value="F:magnesium ion binding"/>
    <property type="evidence" value="ECO:0000318"/>
    <property type="project" value="GO_Central"/>
</dbReference>
<dbReference type="GO" id="GO:0006226">
    <property type="term" value="P:dUMP biosynthetic process"/>
    <property type="evidence" value="ECO:0000318"/>
    <property type="project" value="GO_Central"/>
</dbReference>
<dbReference type="GO" id="GO:0046081">
    <property type="term" value="P:dUTP catabolic process"/>
    <property type="evidence" value="ECO:0000318"/>
    <property type="project" value="GO_Central"/>
</dbReference>
<dbReference type="CDD" id="cd07557">
    <property type="entry name" value="trimeric_dUTPase"/>
    <property type="match status" value="1"/>
</dbReference>
<dbReference type="FunFam" id="2.70.40.10:FF:000004">
    <property type="entry name" value="Deoxyuridine triphosphatase"/>
    <property type="match status" value="1"/>
</dbReference>
<dbReference type="Gene3D" id="2.70.40.10">
    <property type="match status" value="1"/>
</dbReference>
<dbReference type="InterPro" id="IPR008181">
    <property type="entry name" value="dUTPase"/>
</dbReference>
<dbReference type="InterPro" id="IPR029054">
    <property type="entry name" value="dUTPase-like"/>
</dbReference>
<dbReference type="InterPro" id="IPR036157">
    <property type="entry name" value="dUTPase-like_sf"/>
</dbReference>
<dbReference type="InterPro" id="IPR033704">
    <property type="entry name" value="dUTPase_trimeric"/>
</dbReference>
<dbReference type="NCBIfam" id="TIGR00576">
    <property type="entry name" value="dut"/>
    <property type="match status" value="1"/>
</dbReference>
<dbReference type="NCBIfam" id="NF001862">
    <property type="entry name" value="PRK00601.1"/>
    <property type="match status" value="1"/>
</dbReference>
<dbReference type="PANTHER" id="PTHR11241">
    <property type="entry name" value="DEOXYURIDINE 5'-TRIPHOSPHATE NUCLEOTIDOHYDROLASE"/>
    <property type="match status" value="1"/>
</dbReference>
<dbReference type="PANTHER" id="PTHR11241:SF0">
    <property type="entry name" value="DEOXYURIDINE 5'-TRIPHOSPHATE NUCLEOTIDOHYDROLASE"/>
    <property type="match status" value="1"/>
</dbReference>
<dbReference type="Pfam" id="PF00692">
    <property type="entry name" value="dUTPase"/>
    <property type="match status" value="1"/>
</dbReference>
<dbReference type="SUPFAM" id="SSF51283">
    <property type="entry name" value="dUTPase-like"/>
    <property type="match status" value="1"/>
</dbReference>
<evidence type="ECO:0000250" key="1"/>
<evidence type="ECO:0000305" key="2"/>
<comment type="function">
    <text evidence="1">This enzyme is involved in nucleotide metabolism: it produces dUMP, the immediate precursor of thymidine nucleotides and it decreases the intracellular concentration of dUTP, preventing uracil incorporation into DNA.</text>
</comment>
<comment type="catalytic activity">
    <reaction>
        <text>dUTP + H2O = dUMP + diphosphate + H(+)</text>
        <dbReference type="Rhea" id="RHEA:10248"/>
        <dbReference type="ChEBI" id="CHEBI:15377"/>
        <dbReference type="ChEBI" id="CHEBI:15378"/>
        <dbReference type="ChEBI" id="CHEBI:33019"/>
        <dbReference type="ChEBI" id="CHEBI:61555"/>
        <dbReference type="ChEBI" id="CHEBI:246422"/>
        <dbReference type="EC" id="3.6.1.23"/>
    </reaction>
</comment>
<comment type="cofactor">
    <cofactor evidence="1">
        <name>Mg(2+)</name>
        <dbReference type="ChEBI" id="CHEBI:18420"/>
    </cofactor>
    <text evidence="1">Binds 1 Mg(2+) per trimer.</text>
</comment>
<comment type="pathway">
    <text>Pyrimidine metabolism; dUMP biosynthesis; dUMP from dCTP (dUTP route): step 2/2.</text>
</comment>
<comment type="subunit">
    <text evidence="1">Homotrimer.</text>
</comment>
<comment type="similarity">
    <text evidence="2">Belongs to the dUTPase family.</text>
</comment>
<comment type="sequence caution" evidence="2">
    <conflict type="erroneous gene model prediction">
        <sequence resource="EMBL-CDS" id="AAP44642"/>
    </conflict>
</comment>
<comment type="sequence caution" evidence="2">
    <conflict type="erroneous gene model prediction">
        <sequence resource="EMBL-CDS" id="ABF98100"/>
    </conflict>
</comment>
<comment type="sequence caution" evidence="2">
    <conflict type="erroneous gene model prediction">
        <sequence resource="EMBL-CDS" id="BAF12776"/>
    </conflict>
</comment>
<accession>Q10FF9</accession>
<accession>Q0DPR2</accession>
<accession>Q10FG0</accession>
<accession>Q7Y196</accession>
<sequence length="171" mass="17340">MATATNGNASAAAAAADSAVQEPPHKIAKVAPLLKVKKLSENAVLPSRGSALAAGYDLSSAAEVVVPARGKAMVPTDLSIAIPEGTYARVAPRSGLALKHSIDVGAGVIDADYRGPVGVILFNHSDTDFAVKPGDRIAQMIIEVIVTPEVAEVEDLDATVRGEGGFGSTGV</sequence>
<protein>
    <recommendedName>
        <fullName>Deoxyuridine 5'-triphosphate nucleotidohydrolase</fullName>
        <shortName>dUTPase</shortName>
        <ecNumber>3.6.1.23</ecNumber>
    </recommendedName>
    <alternativeName>
        <fullName>dUTP pyrophosphatase</fullName>
    </alternativeName>
</protein>
<name>DUT_ORYSJ</name>
<feature type="chain" id="PRO_0000401367" description="Deoxyuridine 5'-triphosphate nucleotidohydrolase">
    <location>
        <begin position="1"/>
        <end position="171"/>
    </location>
</feature>
<feature type="binding site" evidence="1">
    <location>
        <position position="143"/>
    </location>
    <ligand>
        <name>Mg(2+)</name>
        <dbReference type="ChEBI" id="CHEBI:18420"/>
        <note>ligand shared between trimeric partners</note>
    </ligand>
</feature>
<reference key="1">
    <citation type="journal article" date="2005" name="Genome Res.">
        <title>Sequence, annotation, and analysis of synteny between rice chromosome 3 and diverged grass species.</title>
        <authorList>
            <consortium name="The rice chromosome 3 sequencing consortium"/>
            <person name="Buell C.R."/>
            <person name="Yuan Q."/>
            <person name="Ouyang S."/>
            <person name="Liu J."/>
            <person name="Zhu W."/>
            <person name="Wang A."/>
            <person name="Maiti R."/>
            <person name="Haas B."/>
            <person name="Wortman J."/>
            <person name="Pertea M."/>
            <person name="Jones K.M."/>
            <person name="Kim M."/>
            <person name="Overton L."/>
            <person name="Tsitrin T."/>
            <person name="Fadrosh D."/>
            <person name="Bera J."/>
            <person name="Weaver B."/>
            <person name="Jin S."/>
            <person name="Johri S."/>
            <person name="Reardon M."/>
            <person name="Webb K."/>
            <person name="Hill J."/>
            <person name="Moffat K."/>
            <person name="Tallon L."/>
            <person name="Van Aken S."/>
            <person name="Lewis M."/>
            <person name="Utterback T."/>
            <person name="Feldblyum T."/>
            <person name="Zismann V."/>
            <person name="Iobst S."/>
            <person name="Hsiao J."/>
            <person name="de Vazeille A.R."/>
            <person name="Salzberg S.L."/>
            <person name="White O."/>
            <person name="Fraser C.M."/>
            <person name="Yu Y."/>
            <person name="Kim H."/>
            <person name="Rambo T."/>
            <person name="Currie J."/>
            <person name="Collura K."/>
            <person name="Kernodle-Thompson S."/>
            <person name="Wei F."/>
            <person name="Kudrna K."/>
            <person name="Ammiraju J.S.S."/>
            <person name="Luo M."/>
            <person name="Goicoechea J.L."/>
            <person name="Wing R.A."/>
            <person name="Henry D."/>
            <person name="Oates R."/>
            <person name="Palmer M."/>
            <person name="Pries G."/>
            <person name="Saski C."/>
            <person name="Simmons J."/>
            <person name="Soderlund C."/>
            <person name="Nelson W."/>
            <person name="de la Bastide M."/>
            <person name="Spiegel L."/>
            <person name="Nascimento L."/>
            <person name="Huang E."/>
            <person name="Preston R."/>
            <person name="Zutavern T."/>
            <person name="Palmer L."/>
            <person name="O'Shaughnessy A."/>
            <person name="Dike S."/>
            <person name="McCombie W.R."/>
            <person name="Minx P."/>
            <person name="Cordum H."/>
            <person name="Wilson R."/>
            <person name="Jin W."/>
            <person name="Lee H.R."/>
            <person name="Jiang J."/>
            <person name="Jackson S."/>
        </authorList>
    </citation>
    <scope>NUCLEOTIDE SEQUENCE [LARGE SCALE GENOMIC DNA]</scope>
    <source>
        <strain>cv. Nipponbare</strain>
    </source>
</reference>
<reference key="2">
    <citation type="journal article" date="2005" name="Nature">
        <title>The map-based sequence of the rice genome.</title>
        <authorList>
            <consortium name="International rice genome sequencing project (IRGSP)"/>
        </authorList>
    </citation>
    <scope>NUCLEOTIDE SEQUENCE [LARGE SCALE GENOMIC DNA]</scope>
    <source>
        <strain>cv. Nipponbare</strain>
    </source>
</reference>
<reference key="3">
    <citation type="journal article" date="2008" name="Nucleic Acids Res.">
        <title>The rice annotation project database (RAP-DB): 2008 update.</title>
        <authorList>
            <consortium name="The rice annotation project (RAP)"/>
        </authorList>
    </citation>
    <scope>GENOME REANNOTATION</scope>
    <source>
        <strain>cv. Nipponbare</strain>
    </source>
</reference>
<reference key="4">
    <citation type="journal article" date="2013" name="Rice">
        <title>Improvement of the Oryza sativa Nipponbare reference genome using next generation sequence and optical map data.</title>
        <authorList>
            <person name="Kawahara Y."/>
            <person name="de la Bastide M."/>
            <person name="Hamilton J.P."/>
            <person name="Kanamori H."/>
            <person name="McCombie W.R."/>
            <person name="Ouyang S."/>
            <person name="Schwartz D.C."/>
            <person name="Tanaka T."/>
            <person name="Wu J."/>
            <person name="Zhou S."/>
            <person name="Childs K.L."/>
            <person name="Davidson R.M."/>
            <person name="Lin H."/>
            <person name="Quesada-Ocampo L."/>
            <person name="Vaillancourt B."/>
            <person name="Sakai H."/>
            <person name="Lee S.S."/>
            <person name="Kim J."/>
            <person name="Numa H."/>
            <person name="Itoh T."/>
            <person name="Buell C.R."/>
            <person name="Matsumoto T."/>
        </authorList>
    </citation>
    <scope>GENOME REANNOTATION</scope>
    <source>
        <strain>cv. Nipponbare</strain>
    </source>
</reference>